<reference key="1">
    <citation type="journal article" date="2009" name="Proc. Natl. Acad. Sci. U.S.A.">
        <title>Biogeography of the Sulfolobus islandicus pan-genome.</title>
        <authorList>
            <person name="Reno M.L."/>
            <person name="Held N.L."/>
            <person name="Fields C.J."/>
            <person name="Burke P.V."/>
            <person name="Whitaker R.J."/>
        </authorList>
    </citation>
    <scope>NUCLEOTIDE SEQUENCE [LARGE SCALE GENOMIC DNA]</scope>
    <source>
        <strain>M.16.4 / Kamchatka #3</strain>
    </source>
</reference>
<accession>C4KIA7</accession>
<keyword id="KW-0408">Iron</keyword>
<keyword id="KW-0479">Metal-binding</keyword>
<keyword id="KW-0520">NAD</keyword>
<keyword id="KW-0784">Thiamine biosynthesis</keyword>
<keyword id="KW-0808">Transferase</keyword>
<evidence type="ECO:0000255" key="1">
    <source>
        <dbReference type="HAMAP-Rule" id="MF_00304"/>
    </source>
</evidence>
<gene>
    <name evidence="1" type="primary">thi4</name>
    <name type="ordered locus">M164_1717</name>
</gene>
<comment type="function">
    <text evidence="1">Involved in the biosynthesis of the thiazole moiety of thiamine. Catalyzes the conversion of NAD and glycine to adenosine diphosphate 5-(2-hydroxyethyl)-4-methylthiazole-2-carboxylate (ADT), an adenylated thiazole intermediate, using free sulfide as a source of sulfur.</text>
</comment>
<comment type="catalytic activity">
    <reaction evidence="1">
        <text>hydrogen sulfide + glycine + NAD(+) = ADP-5-ethyl-4-methylthiazole-2-carboxylate + nicotinamide + 3 H2O + H(+)</text>
        <dbReference type="Rhea" id="RHEA:55704"/>
        <dbReference type="ChEBI" id="CHEBI:15377"/>
        <dbReference type="ChEBI" id="CHEBI:15378"/>
        <dbReference type="ChEBI" id="CHEBI:17154"/>
        <dbReference type="ChEBI" id="CHEBI:29919"/>
        <dbReference type="ChEBI" id="CHEBI:57305"/>
        <dbReference type="ChEBI" id="CHEBI:57540"/>
        <dbReference type="ChEBI" id="CHEBI:139151"/>
        <dbReference type="EC" id="2.4.2.59"/>
    </reaction>
</comment>
<comment type="cofactor">
    <cofactor evidence="1">
        <name>Fe(2+)</name>
        <dbReference type="ChEBI" id="CHEBI:29033"/>
    </cofactor>
</comment>
<comment type="pathway">
    <text evidence="1">Cofactor biosynthesis; thiamine diphosphate biosynthesis.</text>
</comment>
<comment type="subunit">
    <text evidence="1">Homooctamer; tetramer of dimers.</text>
</comment>
<comment type="similarity">
    <text evidence="1">Belongs to the THI4 family.</text>
</comment>
<protein>
    <recommendedName>
        <fullName evidence="1">Thiamine thiazole synthase</fullName>
        <ecNumber evidence="1">2.4.2.59</ecNumber>
    </recommendedName>
</protein>
<organism>
    <name type="scientific">Saccharolobus islandicus (strain M.16.4 / Kamchatka #3)</name>
    <name type="common">Sulfolobus islandicus</name>
    <dbReference type="NCBI Taxonomy" id="426118"/>
    <lineage>
        <taxon>Archaea</taxon>
        <taxon>Thermoproteota</taxon>
        <taxon>Thermoprotei</taxon>
        <taxon>Sulfolobales</taxon>
        <taxon>Sulfolobaceae</taxon>
        <taxon>Saccharolobus</taxon>
    </lineage>
</organism>
<dbReference type="EC" id="2.4.2.59" evidence="1"/>
<dbReference type="EMBL" id="CP001402">
    <property type="protein sequence ID" value="ACR42321.1"/>
    <property type="molecule type" value="Genomic_DNA"/>
</dbReference>
<dbReference type="RefSeq" id="WP_012713900.1">
    <property type="nucleotide sequence ID" value="NC_012726.1"/>
</dbReference>
<dbReference type="SMR" id="C4KIA7"/>
<dbReference type="KEGG" id="sid:M164_1717"/>
<dbReference type="HOGENOM" id="CLU_053727_2_0_2"/>
<dbReference type="UniPathway" id="UPA00060"/>
<dbReference type="Proteomes" id="UP000001479">
    <property type="component" value="Chromosome"/>
</dbReference>
<dbReference type="GO" id="GO:0005506">
    <property type="term" value="F:iron ion binding"/>
    <property type="evidence" value="ECO:0007669"/>
    <property type="project" value="UniProtKB-UniRule"/>
</dbReference>
<dbReference type="GO" id="GO:0016763">
    <property type="term" value="F:pentosyltransferase activity"/>
    <property type="evidence" value="ECO:0007669"/>
    <property type="project" value="UniProtKB-UniRule"/>
</dbReference>
<dbReference type="GO" id="GO:0009228">
    <property type="term" value="P:thiamine biosynthetic process"/>
    <property type="evidence" value="ECO:0007669"/>
    <property type="project" value="UniProtKB-KW"/>
</dbReference>
<dbReference type="GO" id="GO:0009229">
    <property type="term" value="P:thiamine diphosphate biosynthetic process"/>
    <property type="evidence" value="ECO:0007669"/>
    <property type="project" value="UniProtKB-UniRule"/>
</dbReference>
<dbReference type="GO" id="GO:0052837">
    <property type="term" value="P:thiazole biosynthetic process"/>
    <property type="evidence" value="ECO:0007669"/>
    <property type="project" value="UniProtKB-UniRule"/>
</dbReference>
<dbReference type="Gene3D" id="3.50.50.60">
    <property type="entry name" value="FAD/NAD(P)-binding domain"/>
    <property type="match status" value="1"/>
</dbReference>
<dbReference type="HAMAP" id="MF_00304">
    <property type="entry name" value="Thi4"/>
    <property type="match status" value="1"/>
</dbReference>
<dbReference type="InterPro" id="IPR036188">
    <property type="entry name" value="FAD/NAD-bd_sf"/>
</dbReference>
<dbReference type="InterPro" id="IPR002922">
    <property type="entry name" value="Thi4_fam"/>
</dbReference>
<dbReference type="InterPro" id="IPR022828">
    <property type="entry name" value="Thi4_prok"/>
</dbReference>
<dbReference type="NCBIfam" id="TIGR00292">
    <property type="entry name" value="sulfide-dependent adenosine diphosphate thiazole synthase"/>
    <property type="match status" value="1"/>
</dbReference>
<dbReference type="PANTHER" id="PTHR43422">
    <property type="entry name" value="THIAMINE THIAZOLE SYNTHASE"/>
    <property type="match status" value="1"/>
</dbReference>
<dbReference type="PANTHER" id="PTHR43422:SF3">
    <property type="entry name" value="THIAMINE THIAZOLE SYNTHASE"/>
    <property type="match status" value="1"/>
</dbReference>
<dbReference type="Pfam" id="PF01946">
    <property type="entry name" value="Thi4"/>
    <property type="match status" value="1"/>
</dbReference>
<dbReference type="PRINTS" id="PR00368">
    <property type="entry name" value="FADPNR"/>
</dbReference>
<dbReference type="PRINTS" id="PR00411">
    <property type="entry name" value="PNDRDTASEI"/>
</dbReference>
<dbReference type="SUPFAM" id="SSF51905">
    <property type="entry name" value="FAD/NAD(P)-binding domain"/>
    <property type="match status" value="1"/>
</dbReference>
<sequence length="267" mass="28688">MEVKIKQVDEVKISRYIIKETMEDWYQFVESDVVIVGAGPSGLSAAYYLAKAGLKTLVFERRLSFGGGIGGGAMLFHKLIIEKPADEILREVNVRLKEVEEGVYVVDSAEFMAKLATAAIDAGAKIIHGVTVDDVIFRENPLRVAGVAVEWTATQMASLHVDPIFISAKAVVDATGHDAEVISVAARKIPELGIVIPGEKSAYSERAEELTVINTGKVAEGLYAAGMAVTEVKGLPRMGPIFGAMVLSGKAVAEEITKDLLKSEIRT</sequence>
<proteinExistence type="inferred from homology"/>
<name>THI4_SACI6</name>
<feature type="chain" id="PRO_1000205006" description="Thiamine thiazole synthase">
    <location>
        <begin position="1"/>
        <end position="267"/>
    </location>
</feature>
<feature type="binding site" description="in other chain" evidence="1">
    <location>
        <position position="41"/>
    </location>
    <ligand>
        <name>NAD(+)</name>
        <dbReference type="ChEBI" id="CHEBI:57540"/>
        <note>ligand shared between two adjacent protomers</note>
    </ligand>
</feature>
<feature type="binding site" description="in other chain" evidence="1">
    <location>
        <begin position="60"/>
        <end position="61"/>
    </location>
    <ligand>
        <name>NAD(+)</name>
        <dbReference type="ChEBI" id="CHEBI:57540"/>
        <note>ligand shared between two adjacent protomers</note>
    </ligand>
</feature>
<feature type="binding site" description="in other chain" evidence="1">
    <location>
        <position position="68"/>
    </location>
    <ligand>
        <name>NAD(+)</name>
        <dbReference type="ChEBI" id="CHEBI:57540"/>
        <note>ligand shared between two adjacent protomers</note>
    </ligand>
</feature>
<feature type="binding site" description="in other chain" evidence="1">
    <location>
        <position position="132"/>
    </location>
    <ligand>
        <name>NAD(+)</name>
        <dbReference type="ChEBI" id="CHEBI:57540"/>
        <note>ligand shared between two adjacent protomers</note>
    </ligand>
</feature>
<feature type="binding site" evidence="1">
    <location>
        <begin position="160"/>
        <end position="162"/>
    </location>
    <ligand>
        <name>NAD(+)</name>
        <dbReference type="ChEBI" id="CHEBI:57540"/>
        <note>ligand shared between two adjacent protomers</note>
    </ligand>
</feature>
<feature type="binding site" evidence="1">
    <location>
        <position position="162"/>
    </location>
    <ligand>
        <name>Fe cation</name>
        <dbReference type="ChEBI" id="CHEBI:24875"/>
        <note>ligand shared between two adjacent protomers</note>
    </ligand>
</feature>
<feature type="binding site" description="in other chain" evidence="1">
    <location>
        <position position="177"/>
    </location>
    <ligand>
        <name>Fe cation</name>
        <dbReference type="ChEBI" id="CHEBI:24875"/>
        <note>ligand shared between two adjacent protomers</note>
    </ligand>
</feature>
<feature type="binding site" description="in other chain" evidence="1">
    <location>
        <position position="227"/>
    </location>
    <ligand>
        <name>NAD(+)</name>
        <dbReference type="ChEBI" id="CHEBI:57540"/>
        <note>ligand shared between two adjacent protomers</note>
    </ligand>
</feature>
<feature type="binding site" evidence="1">
    <location>
        <position position="237"/>
    </location>
    <ligand>
        <name>glycine</name>
        <dbReference type="ChEBI" id="CHEBI:57305"/>
    </ligand>
</feature>